<gene>
    <name evidence="1" type="primary">rplW</name>
    <name type="ordered locus">BMASAVP1_A3167</name>
</gene>
<name>RL23_BURMS</name>
<feature type="chain" id="PRO_1000068048" description="Large ribosomal subunit protein uL23">
    <location>
        <begin position="1"/>
        <end position="104"/>
    </location>
</feature>
<keyword id="KW-0687">Ribonucleoprotein</keyword>
<keyword id="KW-0689">Ribosomal protein</keyword>
<keyword id="KW-0694">RNA-binding</keyword>
<keyword id="KW-0699">rRNA-binding</keyword>
<dbReference type="EMBL" id="CP000526">
    <property type="protein sequence ID" value="ABM49607.1"/>
    <property type="molecule type" value="Genomic_DNA"/>
</dbReference>
<dbReference type="RefSeq" id="WP_004199275.1">
    <property type="nucleotide sequence ID" value="NC_008785.1"/>
</dbReference>
<dbReference type="SMR" id="A1V8A1"/>
<dbReference type="GeneID" id="98107158"/>
<dbReference type="KEGG" id="bmv:BMASAVP1_A3167"/>
<dbReference type="HOGENOM" id="CLU_037562_3_1_4"/>
<dbReference type="GO" id="GO:1990904">
    <property type="term" value="C:ribonucleoprotein complex"/>
    <property type="evidence" value="ECO:0007669"/>
    <property type="project" value="UniProtKB-KW"/>
</dbReference>
<dbReference type="GO" id="GO:0005840">
    <property type="term" value="C:ribosome"/>
    <property type="evidence" value="ECO:0007669"/>
    <property type="project" value="UniProtKB-KW"/>
</dbReference>
<dbReference type="GO" id="GO:0019843">
    <property type="term" value="F:rRNA binding"/>
    <property type="evidence" value="ECO:0007669"/>
    <property type="project" value="UniProtKB-UniRule"/>
</dbReference>
<dbReference type="GO" id="GO:0003735">
    <property type="term" value="F:structural constituent of ribosome"/>
    <property type="evidence" value="ECO:0007669"/>
    <property type="project" value="InterPro"/>
</dbReference>
<dbReference type="GO" id="GO:0006412">
    <property type="term" value="P:translation"/>
    <property type="evidence" value="ECO:0007669"/>
    <property type="project" value="UniProtKB-UniRule"/>
</dbReference>
<dbReference type="FunFam" id="3.30.70.330:FF:000001">
    <property type="entry name" value="50S ribosomal protein L23"/>
    <property type="match status" value="1"/>
</dbReference>
<dbReference type="Gene3D" id="3.30.70.330">
    <property type="match status" value="1"/>
</dbReference>
<dbReference type="HAMAP" id="MF_01369_B">
    <property type="entry name" value="Ribosomal_uL23_B"/>
    <property type="match status" value="1"/>
</dbReference>
<dbReference type="InterPro" id="IPR012677">
    <property type="entry name" value="Nucleotide-bd_a/b_plait_sf"/>
</dbReference>
<dbReference type="InterPro" id="IPR013025">
    <property type="entry name" value="Ribosomal_uL23-like"/>
</dbReference>
<dbReference type="InterPro" id="IPR012678">
    <property type="entry name" value="Ribosomal_uL23/eL15/eS24_sf"/>
</dbReference>
<dbReference type="NCBIfam" id="NF004359">
    <property type="entry name" value="PRK05738.1-3"/>
    <property type="match status" value="1"/>
</dbReference>
<dbReference type="NCBIfam" id="NF004363">
    <property type="entry name" value="PRK05738.2-4"/>
    <property type="match status" value="1"/>
</dbReference>
<dbReference type="PANTHER" id="PTHR11620">
    <property type="entry name" value="60S RIBOSOMAL PROTEIN L23A"/>
    <property type="match status" value="1"/>
</dbReference>
<dbReference type="Pfam" id="PF00276">
    <property type="entry name" value="Ribosomal_L23"/>
    <property type="match status" value="1"/>
</dbReference>
<dbReference type="SUPFAM" id="SSF54189">
    <property type="entry name" value="Ribosomal proteins S24e, L23 and L15e"/>
    <property type="match status" value="1"/>
</dbReference>
<evidence type="ECO:0000255" key="1">
    <source>
        <dbReference type="HAMAP-Rule" id="MF_01369"/>
    </source>
</evidence>
<evidence type="ECO:0000305" key="2"/>
<sequence>MSEIRKNDHRLMQVLLAPVISEKATLVADKNEQVVFEVAPDATKQEVKAAVELLFKVEVDSVNVLVQKGKQKRFGRSMGRRKDVKKAYVCLKPGQEINFEAEAK</sequence>
<proteinExistence type="inferred from homology"/>
<organism>
    <name type="scientific">Burkholderia mallei (strain SAVP1)</name>
    <dbReference type="NCBI Taxonomy" id="320388"/>
    <lineage>
        <taxon>Bacteria</taxon>
        <taxon>Pseudomonadati</taxon>
        <taxon>Pseudomonadota</taxon>
        <taxon>Betaproteobacteria</taxon>
        <taxon>Burkholderiales</taxon>
        <taxon>Burkholderiaceae</taxon>
        <taxon>Burkholderia</taxon>
        <taxon>pseudomallei group</taxon>
    </lineage>
</organism>
<reference key="1">
    <citation type="journal article" date="2010" name="Genome Biol. Evol.">
        <title>Continuing evolution of Burkholderia mallei through genome reduction and large-scale rearrangements.</title>
        <authorList>
            <person name="Losada L."/>
            <person name="Ronning C.M."/>
            <person name="DeShazer D."/>
            <person name="Woods D."/>
            <person name="Fedorova N."/>
            <person name="Kim H.S."/>
            <person name="Shabalina S.A."/>
            <person name="Pearson T.R."/>
            <person name="Brinkac L."/>
            <person name="Tan P."/>
            <person name="Nandi T."/>
            <person name="Crabtree J."/>
            <person name="Badger J."/>
            <person name="Beckstrom-Sternberg S."/>
            <person name="Saqib M."/>
            <person name="Schutzer S.E."/>
            <person name="Keim P."/>
            <person name="Nierman W.C."/>
        </authorList>
    </citation>
    <scope>NUCLEOTIDE SEQUENCE [LARGE SCALE GENOMIC DNA]</scope>
    <source>
        <strain>SAVP1</strain>
    </source>
</reference>
<accession>A1V8A1</accession>
<comment type="function">
    <text evidence="1">One of the early assembly proteins it binds 23S rRNA. One of the proteins that surrounds the polypeptide exit tunnel on the outside of the ribosome. Forms the main docking site for trigger factor binding to the ribosome.</text>
</comment>
<comment type="subunit">
    <text evidence="1">Part of the 50S ribosomal subunit. Contacts protein L29, and trigger factor when it is bound to the ribosome.</text>
</comment>
<comment type="similarity">
    <text evidence="1">Belongs to the universal ribosomal protein uL23 family.</text>
</comment>
<protein>
    <recommendedName>
        <fullName evidence="1">Large ribosomal subunit protein uL23</fullName>
    </recommendedName>
    <alternativeName>
        <fullName evidence="2">50S ribosomal protein L23</fullName>
    </alternativeName>
</protein>